<proteinExistence type="evidence at protein level"/>
<gene>
    <name type="primary">F</name>
</gene>
<protein>
    <recommendedName>
        <fullName>Fusion glycoprotein F0</fullName>
    </recommendedName>
    <component>
        <recommendedName>
            <fullName>Fusion glycoprotein F2</fullName>
        </recommendedName>
    </component>
    <component>
        <recommendedName>
            <fullName>Fusion glycoprotein F1</fullName>
        </recommendedName>
    </component>
</protein>
<evidence type="ECO:0000250" key="1"/>
<evidence type="ECO:0000255" key="2"/>
<evidence type="ECO:0000305" key="3"/>
<evidence type="ECO:0007829" key="4">
    <source>
        <dbReference type="PDB" id="1ZTM"/>
    </source>
</evidence>
<evidence type="ECO:0007829" key="5">
    <source>
        <dbReference type="PDB" id="6O40"/>
    </source>
</evidence>
<name>FUS_PI3H4</name>
<feature type="signal peptide" evidence="2">
    <location>
        <begin position="1"/>
        <end position="18"/>
    </location>
</feature>
<feature type="chain" id="PRO_0000039345" description="Fusion glycoprotein F0">
    <location>
        <begin position="19"/>
        <end position="539"/>
    </location>
</feature>
<feature type="chain" id="PRO_0000039346" description="Fusion glycoprotein F2">
    <location>
        <begin position="19"/>
        <end position="109"/>
    </location>
</feature>
<feature type="chain" id="PRO_0000039347" description="Fusion glycoprotein F1">
    <location>
        <begin position="110"/>
        <end position="539"/>
    </location>
</feature>
<feature type="topological domain" description="Extracellular" evidence="1">
    <location>
        <begin position="19"/>
        <end position="493"/>
    </location>
</feature>
<feature type="transmembrane region" description="Helical" evidence="1">
    <location>
        <begin position="494"/>
        <end position="514"/>
    </location>
</feature>
<feature type="topological domain" description="Cytoplasmic" evidence="1">
    <location>
        <begin position="515"/>
        <end position="539"/>
    </location>
</feature>
<feature type="region of interest" description="Fusion peptide" evidence="1">
    <location>
        <begin position="110"/>
        <end position="134"/>
    </location>
</feature>
<feature type="coiled-coil region" evidence="2">
    <location>
        <begin position="135"/>
        <end position="163"/>
    </location>
</feature>
<feature type="coiled-coil region" evidence="2">
    <location>
        <begin position="459"/>
        <end position="484"/>
    </location>
</feature>
<feature type="site" description="Cleavage; by host" evidence="1">
    <location>
        <begin position="109"/>
        <end position="110"/>
    </location>
</feature>
<feature type="glycosylation site" description="N-linked (GlcNAc...) asparagine; by host" evidence="2">
    <location>
        <position position="238"/>
    </location>
</feature>
<feature type="glycosylation site" description="N-linked (GlcNAc...) asparagine; by host" evidence="2">
    <location>
        <position position="359"/>
    </location>
</feature>
<feature type="glycosylation site" description="N-linked (GlcNAc...) asparagine; by host" evidence="2">
    <location>
        <position position="446"/>
    </location>
</feature>
<feature type="disulfide bond" description="Interchain (between F2 and F1 chains)" evidence="1">
    <location>
        <begin position="63"/>
        <end position="192"/>
    </location>
</feature>
<feature type="disulfide bond" evidence="1">
    <location>
        <begin position="331"/>
        <end position="340"/>
    </location>
</feature>
<feature type="disulfide bond" evidence="1">
    <location>
        <begin position="355"/>
        <end position="363"/>
    </location>
</feature>
<feature type="disulfide bond" evidence="1">
    <location>
        <begin position="387"/>
        <end position="392"/>
    </location>
</feature>
<feature type="disulfide bond" evidence="1">
    <location>
        <begin position="394"/>
        <end position="417"/>
    </location>
</feature>
<feature type="sequence conflict" description="In Ref. 1; BAA00012." evidence="3" ref="1">
    <original>P</original>
    <variation>S</variation>
    <location>
        <position position="35"/>
    </location>
</feature>
<feature type="sequence conflict" description="In Ref. 1; BAA00012." evidence="3" ref="1">
    <original>T</original>
    <variation>A</variation>
    <location>
        <position position="277"/>
    </location>
</feature>
<feature type="sequence conflict" description="In Ref. 2 and 4." evidence="3" ref="2 4">
    <original>R</original>
    <variation>K</variation>
    <location>
        <position position="295"/>
    </location>
</feature>
<feature type="sequence conflict" description="In Ref. 2; CAA28932." evidence="3" ref="2">
    <original>V</original>
    <variation>I</variation>
    <location>
        <position position="328"/>
    </location>
</feature>
<feature type="sequence conflict" description="In Ref. 2 and 4." evidence="3" ref="2 4">
    <original>K</original>
    <variation>T</variation>
    <location>
        <position position="369"/>
    </location>
</feature>
<feature type="sequence conflict" description="In Ref. 2; CAA28932." evidence="3" ref="2">
    <original>A</original>
    <variation>S</variation>
    <location>
        <position position="450"/>
    </location>
</feature>
<feature type="helix" evidence="4">
    <location>
        <begin position="26"/>
        <end position="28"/>
    </location>
</feature>
<feature type="strand" evidence="4">
    <location>
        <begin position="30"/>
        <end position="32"/>
    </location>
</feature>
<feature type="strand" evidence="4">
    <location>
        <begin position="36"/>
        <end position="54"/>
    </location>
</feature>
<feature type="helix" evidence="4">
    <location>
        <begin position="65"/>
        <end position="93"/>
    </location>
</feature>
<feature type="helix" evidence="5">
    <location>
        <begin position="141"/>
        <end position="181"/>
    </location>
</feature>
<feature type="helix" evidence="5">
    <location>
        <begin position="183"/>
        <end position="188"/>
    </location>
</feature>
<feature type="turn" evidence="4">
    <location>
        <begin position="215"/>
        <end position="219"/>
    </location>
</feature>
<feature type="helix" evidence="4">
    <location>
        <begin position="228"/>
        <end position="231"/>
    </location>
</feature>
<feature type="turn" evidence="4">
    <location>
        <begin position="232"/>
        <end position="234"/>
    </location>
</feature>
<feature type="helix" evidence="4">
    <location>
        <begin position="239"/>
        <end position="242"/>
    </location>
</feature>
<feature type="strand" evidence="4">
    <location>
        <begin position="244"/>
        <end position="246"/>
    </location>
</feature>
<feature type="helix" evidence="4">
    <location>
        <begin position="250"/>
        <end position="259"/>
    </location>
</feature>
<feature type="strand" evidence="4">
    <location>
        <begin position="263"/>
        <end position="270"/>
    </location>
</feature>
<feature type="turn" evidence="4">
    <location>
        <begin position="271"/>
        <end position="274"/>
    </location>
</feature>
<feature type="strand" evidence="4">
    <location>
        <begin position="275"/>
        <end position="287"/>
    </location>
</feature>
<feature type="strand" evidence="4">
    <location>
        <begin position="291"/>
        <end position="298"/>
    </location>
</feature>
<feature type="strand" evidence="4">
    <location>
        <begin position="301"/>
        <end position="303"/>
    </location>
</feature>
<feature type="strand" evidence="4">
    <location>
        <begin position="306"/>
        <end position="309"/>
    </location>
</feature>
<feature type="strand" evidence="4">
    <location>
        <begin position="314"/>
        <end position="319"/>
    </location>
</feature>
<feature type="strand" evidence="4">
    <location>
        <begin position="322"/>
        <end position="326"/>
    </location>
</feature>
<feature type="strand" evidence="4">
    <location>
        <begin position="335"/>
        <end position="342"/>
    </location>
</feature>
<feature type="helix" evidence="4">
    <location>
        <begin position="350"/>
        <end position="357"/>
    </location>
</feature>
<feature type="helix" evidence="4">
    <location>
        <begin position="360"/>
        <end position="362"/>
    </location>
</feature>
<feature type="strand" evidence="4">
    <location>
        <begin position="375"/>
        <end position="378"/>
    </location>
</feature>
<feature type="strand" evidence="4">
    <location>
        <begin position="380"/>
        <end position="385"/>
    </location>
</feature>
<feature type="turn" evidence="4">
    <location>
        <begin position="387"/>
        <end position="389"/>
    </location>
</feature>
<feature type="strand" evidence="4">
    <location>
        <begin position="392"/>
        <end position="396"/>
    </location>
</feature>
<feature type="strand" evidence="4">
    <location>
        <begin position="410"/>
        <end position="413"/>
    </location>
</feature>
<feature type="turn" evidence="4">
    <location>
        <begin position="414"/>
        <end position="416"/>
    </location>
</feature>
<feature type="strand" evidence="4">
    <location>
        <begin position="418"/>
        <end position="422"/>
    </location>
</feature>
<feature type="strand" evidence="4">
    <location>
        <begin position="425"/>
        <end position="427"/>
    </location>
</feature>
<feature type="strand" evidence="4">
    <location>
        <begin position="436"/>
        <end position="438"/>
    </location>
</feature>
<feature type="helix" evidence="5">
    <location>
        <begin position="453"/>
        <end position="482"/>
    </location>
</feature>
<comment type="function">
    <text evidence="1">Class I viral fusion protein. Under the current model, the protein has at least 3 conformational states: pre-fusion native state, pre-hairpin intermediate state, and post-fusion hairpin state. During viral and plasma cell membrane fusion, the heptad repeat (HR) regions assume a trimer-of-hairpins structure, positioning the fusion peptide in close proximity to the C-terminal region of the ectodomain. The formation of this structure appears to drive apposition and subsequent fusion of viral and plasma cell membranes. Directs fusion of viral and cellular membranes leading to delivery of the nucleocapsid into the cytoplasm. This fusion is pH independent and occurs directly at the outer cell membrane. The trimer of F1-F2 (F protein) probably interacts with HN at the virion surface. Upon HN binding to its cellular receptor, the hydrophobic fusion peptide is unmasked and interacts with the cellular membrane, inducing the fusion between cell and virion membranes. Later in infection, F proteins expressed at the plasma membrane of infected cells could mediate fusion with adjacent cells to form syncytia, a cytopathic effect that could lead to tissue necrosis (By similarity).</text>
</comment>
<comment type="subunit">
    <text evidence="1">Homotrimer of disulfide-linked F1-F2.</text>
</comment>
<comment type="subcellular location">
    <subcellularLocation>
        <location evidence="1">Virion membrane</location>
        <topology evidence="1">Single-pass type I membrane protein</topology>
    </subcellularLocation>
    <subcellularLocation>
        <location evidence="1">Host cell membrane</location>
        <topology evidence="1">Single-pass membrane protein</topology>
    </subcellularLocation>
</comment>
<comment type="PTM">
    <text evidence="1">The inactive precursor F0 is glycosylated and proteolytically cleaved into F1 and F2 to be functionally active. The cleavage is mediated by cellular proteases during the transport and maturation of the polypeptide (By similarity).</text>
</comment>
<comment type="similarity">
    <text evidence="3">Belongs to the paramyxoviruses fusion glycoprotein family.</text>
</comment>
<accession>P06828</accession>
<accession>Q86987</accession>
<keyword id="KW-0002">3D-structure</keyword>
<keyword id="KW-0165">Cleavage on pair of basic residues</keyword>
<keyword id="KW-0175">Coiled coil</keyword>
<keyword id="KW-1015">Disulfide bond</keyword>
<keyword id="KW-1169">Fusion of virus membrane with host cell membrane</keyword>
<keyword id="KW-1168">Fusion of virus membrane with host membrane</keyword>
<keyword id="KW-0325">Glycoprotein</keyword>
<keyword id="KW-1032">Host cell membrane</keyword>
<keyword id="KW-1043">Host membrane</keyword>
<keyword id="KW-0472">Membrane</keyword>
<keyword id="KW-0732">Signal</keyword>
<keyword id="KW-0812">Transmembrane</keyword>
<keyword id="KW-1133">Transmembrane helix</keyword>
<keyword id="KW-0261">Viral envelope protein</keyword>
<keyword id="KW-1162">Viral penetration into host cytoplasm</keyword>
<keyword id="KW-0946">Virion</keyword>
<keyword id="KW-1160">Virus entry into host cell</keyword>
<sequence>MPTSILLIITTMIMASFCQIDITKLQHVGVLVNSPKGMKISQNFETRYLILSLIPKIEDSNSCGDQQIKQYKRLLDRLIIPLYDGLRLQKDVIVSNQESNENTDPRTKRFFGGVIGTIALGVATSAQITAAVALVEAKQARSDIEKLKEAIRDTNKAVQSVQSSIGNLIVAIKSVQDYVNKEIVPSIARLGCEAAGLQLGIALTQHYSELTNIFGDNIGSLQEKGIKLQGIASLYRTNITEIFTTSTVDKYDIYDLLFTESIKVRVIDVDLNDYSITLQVRLPLLTRLLNTQIYRVDSISYNIQNREWYIPLPSHIMTKGAFLGGADVKECIEAFSSYICPSDPGFVLNHEMESCLSGNISQCPRTVVKSDIVPRYAFVNGGVVANCITTTCTCNGIGNRINQPPDQGVKIITHKECNTIGINGMLFNTNKEGTLAFYTPNDITLNNSVALDPIDISIELNKAKSDLEESKEWIRRSNQKLDSIGNWHQSSTTIIIVLIMIIILFIINVTIIIIAVKYYRIQKRNRVDQNDKPYVLTNK</sequence>
<dbReference type="EMBL" id="X05303">
    <property type="protein sequence ID" value="CAA28932.1"/>
    <property type="molecule type" value="Genomic_RNA"/>
</dbReference>
<dbReference type="EMBL" id="D00016">
    <property type="protein sequence ID" value="BAA00012.1"/>
    <property type="molecule type" value="mRNA"/>
</dbReference>
<dbReference type="EMBL" id="M21649">
    <property type="protein sequence ID" value="AAA46852.1"/>
    <property type="molecule type" value="Genomic_RNA"/>
</dbReference>
<dbReference type="EMBL" id="S82195">
    <property type="protein sequence ID" value="AAB21447.1"/>
    <property type="molecule type" value="Genomic_RNA"/>
</dbReference>
<dbReference type="PIR" id="A26764">
    <property type="entry name" value="VGNZH3"/>
</dbReference>
<dbReference type="PIR" id="A47610">
    <property type="entry name" value="A47610"/>
</dbReference>
<dbReference type="PDB" id="1ZTM">
    <property type="method" value="X-ray"/>
    <property type="resolution" value="3.05 A"/>
    <property type="chains" value="A/B/C=19-493"/>
</dbReference>
<dbReference type="PDB" id="6NRO">
    <property type="method" value="X-ray"/>
    <property type="resolution" value="1.75 A"/>
    <property type="chains" value="A/C/E=139-189, B/D/F=449-484"/>
</dbReference>
<dbReference type="PDB" id="6NTX">
    <property type="method" value="X-ray"/>
    <property type="resolution" value="2.20 A"/>
    <property type="chains" value="C/D=449-484"/>
</dbReference>
<dbReference type="PDB" id="6NYX">
    <property type="method" value="X-ray"/>
    <property type="resolution" value="1.85 A"/>
    <property type="chains" value="A/B/C/D/E/F/H/J/L=139-189, G/I/K/M/N/O/P/Q/T=449-484"/>
</dbReference>
<dbReference type="PDB" id="6O40">
    <property type="method" value="X-ray"/>
    <property type="resolution" value="1.20 A"/>
    <property type="chains" value="A=139-189, B=449-484"/>
</dbReference>
<dbReference type="PDB" id="6OJ7">
    <property type="method" value="X-ray"/>
    <property type="resolution" value="1.45 A"/>
    <property type="chains" value="C=449-484"/>
</dbReference>
<dbReference type="PDB" id="6PRL">
    <property type="method" value="X-ray"/>
    <property type="resolution" value="1.87 A"/>
    <property type="chains" value="A/C/E=139-189, B/D/F=449-484"/>
</dbReference>
<dbReference type="PDB" id="6PYQ">
    <property type="method" value="X-ray"/>
    <property type="resolution" value="1.79 A"/>
    <property type="chains" value="B/D/F=449-484"/>
</dbReference>
<dbReference type="PDB" id="6PZ6">
    <property type="method" value="X-ray"/>
    <property type="resolution" value="1.70 A"/>
    <property type="chains" value="A/C/E=139-189, B/D/F=449-484"/>
</dbReference>
<dbReference type="PDB" id="6V3V">
    <property type="method" value="X-ray"/>
    <property type="resolution" value="2.17 A"/>
    <property type="chains" value="A/C/E=139-189, B/D/F=449-484"/>
</dbReference>
<dbReference type="PDB" id="6VAS">
    <property type="method" value="X-ray"/>
    <property type="resolution" value="1.49 A"/>
    <property type="chains" value="A/C=139-189, B/D=449-484"/>
</dbReference>
<dbReference type="PDB" id="6VJO">
    <property type="method" value="X-ray"/>
    <property type="resolution" value="2.00 A"/>
    <property type="chains" value="A=449-484, B=139-189"/>
</dbReference>
<dbReference type="PDB" id="8DG8">
    <property type="method" value="EM"/>
    <property type="resolution" value="3.62 A"/>
    <property type="chains" value="A/B/C=19-484"/>
</dbReference>
<dbReference type="PDBsum" id="1ZTM"/>
<dbReference type="PDBsum" id="6NRO"/>
<dbReference type="PDBsum" id="6NTX"/>
<dbReference type="PDBsum" id="6NYX"/>
<dbReference type="PDBsum" id="6O40"/>
<dbReference type="PDBsum" id="6OJ7"/>
<dbReference type="PDBsum" id="6PRL"/>
<dbReference type="PDBsum" id="6PYQ"/>
<dbReference type="PDBsum" id="6PZ6"/>
<dbReference type="PDBsum" id="6V3V"/>
<dbReference type="PDBsum" id="6VAS"/>
<dbReference type="PDBsum" id="6VJO"/>
<dbReference type="PDBsum" id="8DG8"/>
<dbReference type="EMDB" id="EMD-27418"/>
<dbReference type="SMR" id="P06828"/>
<dbReference type="GlyCosmos" id="P06828">
    <property type="glycosylation" value="3 sites, No reported glycans"/>
</dbReference>
<dbReference type="EvolutionaryTrace" id="P06828"/>
<dbReference type="GO" id="GO:0020002">
    <property type="term" value="C:host cell plasma membrane"/>
    <property type="evidence" value="ECO:0007669"/>
    <property type="project" value="UniProtKB-SubCell"/>
</dbReference>
<dbReference type="GO" id="GO:0016020">
    <property type="term" value="C:membrane"/>
    <property type="evidence" value="ECO:0007669"/>
    <property type="project" value="UniProtKB-KW"/>
</dbReference>
<dbReference type="GO" id="GO:0019031">
    <property type="term" value="C:viral envelope"/>
    <property type="evidence" value="ECO:0007669"/>
    <property type="project" value="UniProtKB-KW"/>
</dbReference>
<dbReference type="GO" id="GO:0055036">
    <property type="term" value="C:virion membrane"/>
    <property type="evidence" value="ECO:0007669"/>
    <property type="project" value="UniProtKB-SubCell"/>
</dbReference>
<dbReference type="GO" id="GO:0019064">
    <property type="term" value="P:fusion of virus membrane with host plasma membrane"/>
    <property type="evidence" value="ECO:0007669"/>
    <property type="project" value="UniProtKB-KW"/>
</dbReference>
<dbReference type="GO" id="GO:0046718">
    <property type="term" value="P:symbiont entry into host cell"/>
    <property type="evidence" value="ECO:0007669"/>
    <property type="project" value="UniProtKB-KW"/>
</dbReference>
<dbReference type="Gene3D" id="1.10.287.2480">
    <property type="match status" value="2"/>
</dbReference>
<dbReference type="Gene3D" id="2.60.40.1690">
    <property type="entry name" value="Head and neck region of the ectodomain of NDV fusion glycoprotein"/>
    <property type="match status" value="1"/>
</dbReference>
<dbReference type="Gene3D" id="2.40.490.10">
    <property type="entry name" value="Newcastle disease virus like domain"/>
    <property type="match status" value="1"/>
</dbReference>
<dbReference type="Gene3D" id="1.10.287.770">
    <property type="entry name" value="YojJ-like"/>
    <property type="match status" value="1"/>
</dbReference>
<dbReference type="InterPro" id="IPR000776">
    <property type="entry name" value="Fusion_F0_Paramyxovir"/>
</dbReference>
<dbReference type="Pfam" id="PF00523">
    <property type="entry name" value="Fusion_gly"/>
    <property type="match status" value="1"/>
</dbReference>
<dbReference type="SUPFAM" id="SSF69922">
    <property type="entry name" value="Head and neck region of the ectodomain of NDV fusion glycoprotein"/>
    <property type="match status" value="1"/>
</dbReference>
<dbReference type="SUPFAM" id="SSF58069">
    <property type="entry name" value="Virus ectodomain"/>
    <property type="match status" value="1"/>
</dbReference>
<organismHost>
    <name type="scientific">Homo sapiens</name>
    <name type="common">Human</name>
    <dbReference type="NCBI Taxonomy" id="9606"/>
</organismHost>
<organism>
    <name type="scientific">Human parainfluenza 3 virus (strain Wash/47885/57)</name>
    <name type="common">HPIV-3</name>
    <name type="synonym">Human parainfluenza 3 virus (strain NIH 47885)</name>
    <dbReference type="NCBI Taxonomy" id="11217"/>
    <lineage>
        <taxon>Viruses</taxon>
        <taxon>Riboviria</taxon>
        <taxon>Orthornavirae</taxon>
        <taxon>Negarnaviricota</taxon>
        <taxon>Haploviricotina</taxon>
        <taxon>Monjiviricetes</taxon>
        <taxon>Mononegavirales</taxon>
        <taxon>Paramyxoviridae</taxon>
        <taxon>Feraresvirinae</taxon>
        <taxon>Respirovirus</taxon>
        <taxon>Respirovirus pneumoniae</taxon>
    </lineage>
</organism>
<reference key="1">
    <citation type="journal article" date="1986" name="Virology">
        <title>Fusion glycoprotein of human parainfluenza virus type 3: nucleotide sequence of the gene, direct identification of the cleavage-activation site, and comparison with other paramyxoviruses.</title>
        <authorList>
            <person name="Spriggs M.K."/>
            <person name="Olmsted R.A."/>
            <person name="Venkatesan S."/>
            <person name="Coligan J.E."/>
            <person name="Collins P.L."/>
        </authorList>
    </citation>
    <scope>NUCLEOTIDE SEQUENCE [MRNA]</scope>
</reference>
<reference key="2">
    <citation type="journal article" date="1987" name="J. Gen. Virol.">
        <title>Nucleotide sequence of the coding and flanking regions of the human parainfluenza virus type 3 fusion glycoprotein gene.</title>
        <authorList>
            <person name="Cote M.J."/>
            <person name="Storey D.G."/>
            <person name="Kang C.Y."/>
            <person name="Dimock K."/>
        </authorList>
    </citation>
    <scope>NUCLEOTIDE SEQUENCE</scope>
</reference>
<reference key="3">
    <citation type="journal article" date="1987" name="Virus Res.">
        <title>Molecular cloning and sequence analysis of the human parainfluenza 3 virus genes encoding the surface glycoproteins, F and HN.</title>
        <authorList>
            <person name="Galinski M.S."/>
            <person name="Mink M.A."/>
            <person name="Pons M.W."/>
        </authorList>
    </citation>
    <scope>NUCLEOTIDE SEQUENCE</scope>
</reference>
<reference key="4">
    <citation type="journal article" date="1992" name="Virus Res.">
        <title>Evolution of the fusion protein gene of human parainfluenza virus 3.</title>
        <authorList>
            <person name="Prinoski K."/>
            <person name="Cote M.J."/>
            <person name="Kang C.Y."/>
            <person name="Dimock K."/>
        </authorList>
    </citation>
    <scope>NUCLEOTIDE SEQUENCE</scope>
</reference>